<feature type="chain" id="PRO_1000018368" description="Tryptophan synthase beta chain">
    <location>
        <begin position="1"/>
        <end position="414"/>
    </location>
</feature>
<feature type="region of interest" description="Disordered" evidence="2">
    <location>
        <begin position="1"/>
        <end position="27"/>
    </location>
</feature>
<feature type="compositionally biased region" description="Basic and acidic residues" evidence="2">
    <location>
        <begin position="1"/>
        <end position="26"/>
    </location>
</feature>
<feature type="modified residue" description="N6-(pyridoxal phosphate)lysine" evidence="1">
    <location>
        <position position="109"/>
    </location>
</feature>
<comment type="function">
    <text evidence="1">The beta subunit is responsible for the synthesis of L-tryptophan from indole and L-serine.</text>
</comment>
<comment type="catalytic activity">
    <reaction evidence="1">
        <text>(1S,2R)-1-C-(indol-3-yl)glycerol 3-phosphate + L-serine = D-glyceraldehyde 3-phosphate + L-tryptophan + H2O</text>
        <dbReference type="Rhea" id="RHEA:10532"/>
        <dbReference type="ChEBI" id="CHEBI:15377"/>
        <dbReference type="ChEBI" id="CHEBI:33384"/>
        <dbReference type="ChEBI" id="CHEBI:57912"/>
        <dbReference type="ChEBI" id="CHEBI:58866"/>
        <dbReference type="ChEBI" id="CHEBI:59776"/>
        <dbReference type="EC" id="4.2.1.20"/>
    </reaction>
</comment>
<comment type="cofactor">
    <cofactor evidence="1">
        <name>pyridoxal 5'-phosphate</name>
        <dbReference type="ChEBI" id="CHEBI:597326"/>
    </cofactor>
</comment>
<comment type="pathway">
    <text evidence="1">Amino-acid biosynthesis; L-tryptophan biosynthesis; L-tryptophan from chorismate: step 5/5.</text>
</comment>
<comment type="subunit">
    <text evidence="1">Tetramer of two alpha and two beta chains.</text>
</comment>
<comment type="similarity">
    <text evidence="1">Belongs to the TrpB family.</text>
</comment>
<gene>
    <name evidence="1" type="primary">trpB</name>
    <name type="ordered locus">P9301_01841</name>
</gene>
<proteinExistence type="inferred from homology"/>
<dbReference type="EC" id="4.2.1.20" evidence="1"/>
<dbReference type="EMBL" id="CP000576">
    <property type="protein sequence ID" value="ABO16807.1"/>
    <property type="molecule type" value="Genomic_DNA"/>
</dbReference>
<dbReference type="RefSeq" id="WP_011862209.1">
    <property type="nucleotide sequence ID" value="NC_009091.1"/>
</dbReference>
<dbReference type="SMR" id="A3PAN2"/>
<dbReference type="STRING" id="167546.P9301_01841"/>
<dbReference type="KEGG" id="pmg:P9301_01841"/>
<dbReference type="eggNOG" id="COG0133">
    <property type="taxonomic scope" value="Bacteria"/>
</dbReference>
<dbReference type="HOGENOM" id="CLU_016734_3_1_3"/>
<dbReference type="OrthoDB" id="9766131at2"/>
<dbReference type="UniPathway" id="UPA00035">
    <property type="reaction ID" value="UER00044"/>
</dbReference>
<dbReference type="Proteomes" id="UP000001430">
    <property type="component" value="Chromosome"/>
</dbReference>
<dbReference type="GO" id="GO:0005737">
    <property type="term" value="C:cytoplasm"/>
    <property type="evidence" value="ECO:0007669"/>
    <property type="project" value="TreeGrafter"/>
</dbReference>
<dbReference type="GO" id="GO:0004834">
    <property type="term" value="F:tryptophan synthase activity"/>
    <property type="evidence" value="ECO:0007669"/>
    <property type="project" value="UniProtKB-UniRule"/>
</dbReference>
<dbReference type="CDD" id="cd06446">
    <property type="entry name" value="Trp-synth_B"/>
    <property type="match status" value="1"/>
</dbReference>
<dbReference type="FunFam" id="3.40.50.1100:FF:000001">
    <property type="entry name" value="Tryptophan synthase beta chain"/>
    <property type="match status" value="1"/>
</dbReference>
<dbReference type="FunFam" id="3.40.50.1100:FF:000004">
    <property type="entry name" value="Tryptophan synthase beta chain"/>
    <property type="match status" value="1"/>
</dbReference>
<dbReference type="Gene3D" id="3.40.50.1100">
    <property type="match status" value="2"/>
</dbReference>
<dbReference type="HAMAP" id="MF_00133">
    <property type="entry name" value="Trp_synth_beta"/>
    <property type="match status" value="1"/>
</dbReference>
<dbReference type="InterPro" id="IPR006653">
    <property type="entry name" value="Trp_synth_b_CS"/>
</dbReference>
<dbReference type="InterPro" id="IPR006654">
    <property type="entry name" value="Trp_synth_beta"/>
</dbReference>
<dbReference type="InterPro" id="IPR023026">
    <property type="entry name" value="Trp_synth_beta/beta-like"/>
</dbReference>
<dbReference type="InterPro" id="IPR001926">
    <property type="entry name" value="TrpB-like_PALP"/>
</dbReference>
<dbReference type="InterPro" id="IPR036052">
    <property type="entry name" value="TrpB-like_PALP_sf"/>
</dbReference>
<dbReference type="NCBIfam" id="TIGR00263">
    <property type="entry name" value="trpB"/>
    <property type="match status" value="1"/>
</dbReference>
<dbReference type="PANTHER" id="PTHR48077:SF3">
    <property type="entry name" value="TRYPTOPHAN SYNTHASE"/>
    <property type="match status" value="1"/>
</dbReference>
<dbReference type="PANTHER" id="PTHR48077">
    <property type="entry name" value="TRYPTOPHAN SYNTHASE-RELATED"/>
    <property type="match status" value="1"/>
</dbReference>
<dbReference type="Pfam" id="PF00291">
    <property type="entry name" value="PALP"/>
    <property type="match status" value="1"/>
</dbReference>
<dbReference type="PIRSF" id="PIRSF001413">
    <property type="entry name" value="Trp_syn_beta"/>
    <property type="match status" value="1"/>
</dbReference>
<dbReference type="SUPFAM" id="SSF53686">
    <property type="entry name" value="Tryptophan synthase beta subunit-like PLP-dependent enzymes"/>
    <property type="match status" value="1"/>
</dbReference>
<dbReference type="PROSITE" id="PS00168">
    <property type="entry name" value="TRP_SYNTHASE_BETA"/>
    <property type="match status" value="1"/>
</dbReference>
<evidence type="ECO:0000255" key="1">
    <source>
        <dbReference type="HAMAP-Rule" id="MF_00133"/>
    </source>
</evidence>
<evidence type="ECO:0000256" key="2">
    <source>
        <dbReference type="SAM" id="MobiDB-lite"/>
    </source>
</evidence>
<keyword id="KW-0028">Amino-acid biosynthesis</keyword>
<keyword id="KW-0057">Aromatic amino acid biosynthesis</keyword>
<keyword id="KW-0456">Lyase</keyword>
<keyword id="KW-0663">Pyridoxal phosphate</keyword>
<keyword id="KW-1185">Reference proteome</keyword>
<keyword id="KW-0822">Tryptophan biosynthesis</keyword>
<protein>
    <recommendedName>
        <fullName evidence="1">Tryptophan synthase beta chain</fullName>
        <ecNumber evidence="1">4.2.1.20</ecNumber>
    </recommendedName>
</protein>
<sequence>MVSTFSRKDQNYKNDDLNQPSKEGRFGKYGGQYVPETLMPALFELETAASNAWKDKLFVEELNHLLKTYVGRETPLYEAKRLTEHYKTKQATPRIWLKREDLNHTGAHKINNALGQALLAIRMGKKRIIAETGAGQHGVATATVCARFGLKCIIYMGAEDIKRQSLNVFRMKLLGAEVKVVNSGTATLKDATSEAIRDWVSNVETTHYILGSVAGPHPFPKIVRDFHAVIGEETKKQCLESFGSFPDILLACVGGGSNAMGLFHPFVKETSVRLIGVEAAGSGVDTDKHAATITKGSVGILHGSMSLLLQDDNGQVQEAHSISAGLDYPGVGPEHSHLKEIGRAEYGSVTDQEALDALKLVSELEGIIPALETSHAFAWLDKLCPTLEKDTHIVINCSGRGDKDVNTVASSLDI</sequence>
<reference key="1">
    <citation type="journal article" date="2007" name="PLoS Genet.">
        <title>Patterns and implications of gene gain and loss in the evolution of Prochlorococcus.</title>
        <authorList>
            <person name="Kettler G.C."/>
            <person name="Martiny A.C."/>
            <person name="Huang K."/>
            <person name="Zucker J."/>
            <person name="Coleman M.L."/>
            <person name="Rodrigue S."/>
            <person name="Chen F."/>
            <person name="Lapidus A."/>
            <person name="Ferriera S."/>
            <person name="Johnson J."/>
            <person name="Steglich C."/>
            <person name="Church G.M."/>
            <person name="Richardson P."/>
            <person name="Chisholm S.W."/>
        </authorList>
    </citation>
    <scope>NUCLEOTIDE SEQUENCE [LARGE SCALE GENOMIC DNA]</scope>
    <source>
        <strain>MIT 9301</strain>
    </source>
</reference>
<name>TRPB_PROM0</name>
<organism>
    <name type="scientific">Prochlorococcus marinus (strain MIT 9301)</name>
    <dbReference type="NCBI Taxonomy" id="167546"/>
    <lineage>
        <taxon>Bacteria</taxon>
        <taxon>Bacillati</taxon>
        <taxon>Cyanobacteriota</taxon>
        <taxon>Cyanophyceae</taxon>
        <taxon>Synechococcales</taxon>
        <taxon>Prochlorococcaceae</taxon>
        <taxon>Prochlorococcus</taxon>
    </lineage>
</organism>
<accession>A3PAN2</accession>